<sequence length="82" mass="9769">MFFKKITLIPFVMLINLYRYCISPFIPARCRYYPTCSEYALEALKTHGILKGLYLTTRRLLRCHPLSKRDYYDLVPCKNKKG</sequence>
<gene>
    <name type="ordered locus">FTM_1615</name>
</gene>
<organism>
    <name type="scientific">Francisella tularensis subsp. mediasiatica (strain FSC147)</name>
    <dbReference type="NCBI Taxonomy" id="441952"/>
    <lineage>
        <taxon>Bacteria</taxon>
        <taxon>Pseudomonadati</taxon>
        <taxon>Pseudomonadota</taxon>
        <taxon>Gammaproteobacteria</taxon>
        <taxon>Thiotrichales</taxon>
        <taxon>Francisellaceae</taxon>
        <taxon>Francisella</taxon>
    </lineage>
</organism>
<name>YIDD_FRATM</name>
<comment type="function">
    <text evidence="1">Could be involved in insertion of integral membrane proteins into the membrane.</text>
</comment>
<comment type="subcellular location">
    <subcellularLocation>
        <location evidence="1">Cell inner membrane</location>
        <topology evidence="1">Peripheral membrane protein</topology>
        <orientation evidence="1">Cytoplasmic side</orientation>
    </subcellularLocation>
</comment>
<comment type="similarity">
    <text evidence="1">Belongs to the UPF0161 family.</text>
</comment>
<reference key="1">
    <citation type="journal article" date="2009" name="PLoS Pathog.">
        <title>Molecular evolutionary consequences of niche restriction in Francisella tularensis, a facultative intracellular pathogen.</title>
        <authorList>
            <person name="Larsson P."/>
            <person name="Elfsmark D."/>
            <person name="Svensson K."/>
            <person name="Wikstroem P."/>
            <person name="Forsman M."/>
            <person name="Brettin T."/>
            <person name="Keim P."/>
            <person name="Johansson A."/>
        </authorList>
    </citation>
    <scope>NUCLEOTIDE SEQUENCE [LARGE SCALE GENOMIC DNA]</scope>
    <source>
        <strain>FSC147</strain>
    </source>
</reference>
<protein>
    <recommendedName>
        <fullName evidence="1">Putative membrane protein insertion efficiency factor</fullName>
    </recommendedName>
</protein>
<accession>B2SE59</accession>
<proteinExistence type="inferred from homology"/>
<feature type="chain" id="PRO_1000122645" description="Putative membrane protein insertion efficiency factor">
    <location>
        <begin position="1"/>
        <end position="82"/>
    </location>
</feature>
<dbReference type="EMBL" id="CP000915">
    <property type="protein sequence ID" value="ACD31423.1"/>
    <property type="molecule type" value="Genomic_DNA"/>
</dbReference>
<dbReference type="KEGG" id="ftm:FTM_1615"/>
<dbReference type="HOGENOM" id="CLU_144811_6_1_6"/>
<dbReference type="GO" id="GO:0005886">
    <property type="term" value="C:plasma membrane"/>
    <property type="evidence" value="ECO:0007669"/>
    <property type="project" value="UniProtKB-SubCell"/>
</dbReference>
<dbReference type="HAMAP" id="MF_00386">
    <property type="entry name" value="UPF0161_YidD"/>
    <property type="match status" value="1"/>
</dbReference>
<dbReference type="InterPro" id="IPR002696">
    <property type="entry name" value="Membr_insert_effic_factor_YidD"/>
</dbReference>
<dbReference type="NCBIfam" id="TIGR00278">
    <property type="entry name" value="membrane protein insertion efficiency factor YidD"/>
    <property type="match status" value="1"/>
</dbReference>
<dbReference type="PANTHER" id="PTHR33383">
    <property type="entry name" value="MEMBRANE PROTEIN INSERTION EFFICIENCY FACTOR-RELATED"/>
    <property type="match status" value="1"/>
</dbReference>
<dbReference type="PANTHER" id="PTHR33383:SF1">
    <property type="entry name" value="MEMBRANE PROTEIN INSERTION EFFICIENCY FACTOR-RELATED"/>
    <property type="match status" value="1"/>
</dbReference>
<dbReference type="Pfam" id="PF01809">
    <property type="entry name" value="YidD"/>
    <property type="match status" value="1"/>
</dbReference>
<dbReference type="SMART" id="SM01234">
    <property type="entry name" value="Haemolytic"/>
    <property type="match status" value="1"/>
</dbReference>
<evidence type="ECO:0000255" key="1">
    <source>
        <dbReference type="HAMAP-Rule" id="MF_00386"/>
    </source>
</evidence>
<keyword id="KW-0997">Cell inner membrane</keyword>
<keyword id="KW-1003">Cell membrane</keyword>
<keyword id="KW-0472">Membrane</keyword>